<reference key="1">
    <citation type="journal article" date="1999" name="J. Biol. Chem.">
        <title>Magnesium insertion by magnesium chelatase in the biosynthesis of zinc bacteriochlorophyll a in an aerobic acidophilic bacterium Acidiphilium rubrum.</title>
        <authorList>
            <person name="Masuda T."/>
            <person name="Inoue K."/>
            <person name="Masuda M."/>
            <person name="Nagayama M."/>
            <person name="Tamaki A."/>
            <person name="Ohta H."/>
            <person name="Shimada H."/>
            <person name="Takamiya K."/>
        </authorList>
    </citation>
    <scope>NUCLEOTIDE SEQUENCE [GENOMIC DNA]</scope>
</reference>
<accession>Q9WXB5</accession>
<dbReference type="EC" id="1.3.7.7" evidence="1"/>
<dbReference type="EMBL" id="AB017351">
    <property type="protein sequence ID" value="BAA76537.1"/>
    <property type="molecule type" value="Genomic_DNA"/>
</dbReference>
<dbReference type="RefSeq" id="WP_029311398.1">
    <property type="nucleotide sequence ID" value="NZ_FTNE01000002.1"/>
</dbReference>
<dbReference type="SMR" id="Q9WXB5"/>
<dbReference type="STRING" id="526.SAMN05421828_10298"/>
<dbReference type="OrthoDB" id="5717231at2"/>
<dbReference type="UniPathway" id="UPA00671"/>
<dbReference type="GO" id="GO:0051539">
    <property type="term" value="F:4 iron, 4 sulfur cluster binding"/>
    <property type="evidence" value="ECO:0007669"/>
    <property type="project" value="UniProtKB-UniRule"/>
</dbReference>
<dbReference type="GO" id="GO:0005524">
    <property type="term" value="F:ATP binding"/>
    <property type="evidence" value="ECO:0007669"/>
    <property type="project" value="UniProtKB-UniRule"/>
</dbReference>
<dbReference type="GO" id="GO:0046872">
    <property type="term" value="F:metal ion binding"/>
    <property type="evidence" value="ECO:0007669"/>
    <property type="project" value="UniProtKB-KW"/>
</dbReference>
<dbReference type="GO" id="GO:0016730">
    <property type="term" value="F:oxidoreductase activity, acting on iron-sulfur proteins as donors"/>
    <property type="evidence" value="ECO:0007669"/>
    <property type="project" value="InterPro"/>
</dbReference>
<dbReference type="GO" id="GO:0016636">
    <property type="term" value="F:oxidoreductase activity, acting on the CH-CH group of donors, iron-sulfur protein as acceptor"/>
    <property type="evidence" value="ECO:0007669"/>
    <property type="project" value="UniProtKB-UniRule"/>
</dbReference>
<dbReference type="GO" id="GO:0036070">
    <property type="term" value="P:light-independent bacteriochlorophyll biosynthetic process"/>
    <property type="evidence" value="ECO:0007669"/>
    <property type="project" value="UniProtKB-UniRule"/>
</dbReference>
<dbReference type="GO" id="GO:0019685">
    <property type="term" value="P:photosynthesis, dark reaction"/>
    <property type="evidence" value="ECO:0007669"/>
    <property type="project" value="InterPro"/>
</dbReference>
<dbReference type="Gene3D" id="1.20.89.20">
    <property type="match status" value="1"/>
</dbReference>
<dbReference type="Gene3D" id="3.40.50.1980">
    <property type="entry name" value="Nitrogenase molybdenum iron protein domain"/>
    <property type="match status" value="3"/>
</dbReference>
<dbReference type="Gene3D" id="1.10.8.550">
    <property type="entry name" value="Proto-chlorophyllide reductase 57 kD subunit B"/>
    <property type="match status" value="1"/>
</dbReference>
<dbReference type="HAMAP" id="MF_00353">
    <property type="entry name" value="ChlB_BchB"/>
    <property type="match status" value="1"/>
</dbReference>
<dbReference type="InterPro" id="IPR050152">
    <property type="entry name" value="ChlB/BchB/BchZ"/>
</dbReference>
<dbReference type="InterPro" id="IPR013580">
    <property type="entry name" value="LI-POR_suB-like_C"/>
</dbReference>
<dbReference type="InterPro" id="IPR000510">
    <property type="entry name" value="Nase/OxRdtase_comp1"/>
</dbReference>
<dbReference type="InterPro" id="IPR042298">
    <property type="entry name" value="P-CP_red_C"/>
</dbReference>
<dbReference type="InterPro" id="IPR005969">
    <property type="entry name" value="Protochl_reductB"/>
</dbReference>
<dbReference type="InterPro" id="IPR016209">
    <property type="entry name" value="Protochlorophyllide_Rdtase"/>
</dbReference>
<dbReference type="NCBIfam" id="TIGR01278">
    <property type="entry name" value="DPOR_BchB"/>
    <property type="match status" value="1"/>
</dbReference>
<dbReference type="PANTHER" id="PTHR33712">
    <property type="entry name" value="LIGHT-INDEPENDENT PROTOCHLOROPHYLLIDE REDUCTASE SUBUNIT B"/>
    <property type="match status" value="1"/>
</dbReference>
<dbReference type="PANTHER" id="PTHR33712:SF7">
    <property type="entry name" value="LIGHT-INDEPENDENT PROTOCHLOROPHYLLIDE REDUCTASE SUBUNIT B"/>
    <property type="match status" value="1"/>
</dbReference>
<dbReference type="Pfam" id="PF00148">
    <property type="entry name" value="Oxidored_nitro"/>
    <property type="match status" value="1"/>
</dbReference>
<dbReference type="Pfam" id="PF08369">
    <property type="entry name" value="PCP_red"/>
    <property type="match status" value="1"/>
</dbReference>
<dbReference type="PIRSF" id="PIRSF000163">
    <property type="entry name" value="PCP_ChlB"/>
    <property type="match status" value="1"/>
</dbReference>
<dbReference type="SUPFAM" id="SSF53807">
    <property type="entry name" value="Helical backbone' metal receptor"/>
    <property type="match status" value="1"/>
</dbReference>
<comment type="function">
    <text evidence="1">Component of the dark-operative protochlorophyllide reductase (DPOR) that uses Mg-ATP and reduced ferredoxin to reduce ring D of protochlorophyllide (Pchlide) to form chlorophyllide a (Chlide). This reaction is light-independent. The NB-protein (BchN-BchB) is the catalytic component of the complex.</text>
</comment>
<comment type="catalytic activity">
    <reaction evidence="1">
        <text>chlorophyllide a + oxidized 2[4Fe-4S]-[ferredoxin] + 2 ADP + 2 phosphate = protochlorophyllide a + reduced 2[4Fe-4S]-[ferredoxin] + 2 ATP + 2 H2O</text>
        <dbReference type="Rhea" id="RHEA:28202"/>
        <dbReference type="Rhea" id="RHEA-COMP:10002"/>
        <dbReference type="Rhea" id="RHEA-COMP:10004"/>
        <dbReference type="ChEBI" id="CHEBI:15377"/>
        <dbReference type="ChEBI" id="CHEBI:30616"/>
        <dbReference type="ChEBI" id="CHEBI:33722"/>
        <dbReference type="ChEBI" id="CHEBI:33723"/>
        <dbReference type="ChEBI" id="CHEBI:43474"/>
        <dbReference type="ChEBI" id="CHEBI:83348"/>
        <dbReference type="ChEBI" id="CHEBI:83350"/>
        <dbReference type="ChEBI" id="CHEBI:456216"/>
        <dbReference type="EC" id="1.3.7.7"/>
    </reaction>
</comment>
<comment type="cofactor">
    <cofactor evidence="1">
        <name>[4Fe-4S] cluster</name>
        <dbReference type="ChEBI" id="CHEBI:49883"/>
    </cofactor>
    <text evidence="1">Binds 1 [4Fe-4S] cluster per heterodimer. The cluster is bound at the heterodimer interface by residues from both subunits.</text>
</comment>
<comment type="pathway">
    <text evidence="1">Porphyrin-containing compound metabolism; bacteriochlorophyll biosynthesis (light-independent).</text>
</comment>
<comment type="subunit">
    <text evidence="1">Protochlorophyllide reductase is composed of three subunits; BchL, BchN and BchB. Forms a heterotetramer of two BchB and two BchN subunits.</text>
</comment>
<comment type="similarity">
    <text evidence="1">Belongs to the ChlB/BchB/BchZ family.</text>
</comment>
<evidence type="ECO:0000255" key="1">
    <source>
        <dbReference type="HAMAP-Rule" id="MF_00353"/>
    </source>
</evidence>
<name>BCHB_ACIRU</name>
<sequence>MQLTLWTYEGPPHIGAMRIATAMQGVHYVLHAPQGDTYADLLFTMIERRDRRPPVTYTTFQARDLGSDTATLFKNAVRDAYDRFKPEAMIVGASCTAELIQDDPGGLAAALGLPIPVIPLELPAYQRKENWGAAETLYHLVRAATNGVATPDRTGRPVAVNILGPAALGFRHRDDLIEVTDLLGKLGVSINVIAPLGARFADLARIPAADANIVLYPEIAGTAAAYLARKFGQKTITTVPIGLNATRDFAAEIAALTGSTVPDDLESQARSSWYARSIDSTYLTGKRVFIFGDASHAIALARIAATEIGFTIAGLGTYSREFAREVKSAAALYNVEALISDDYLTVEAAIAAAQPELVLGTQMERHIAKRLGIPCAVISAPTHVQDFPARHSPFAGFEGANVLFDTLTHPLMMGLEEHLLGMFREDFEFNDQAAPSHLGAEAAAPVATAPILTGWEPSAEAELKKIPFFVRGKARKNTELFAAEHGVTLITIETIYDAKAHFSR</sequence>
<gene>
    <name evidence="1" type="primary">bchB</name>
</gene>
<protein>
    <recommendedName>
        <fullName evidence="1">Light-independent protochlorophyllide reductase subunit B</fullName>
        <shortName evidence="1">DPOR subunit B</shortName>
        <shortName evidence="1">LI-POR subunit B</shortName>
        <ecNumber evidence="1">1.3.7.7</ecNumber>
    </recommendedName>
</protein>
<proteinExistence type="inferred from homology"/>
<feature type="chain" id="PRO_0000219796" description="Light-independent protochlorophyllide reductase subunit B">
    <location>
        <begin position="1"/>
        <end position="504"/>
    </location>
</feature>
<feature type="active site" description="Proton donor" evidence="1">
    <location>
        <position position="279"/>
    </location>
</feature>
<feature type="binding site" evidence="1">
    <location>
        <position position="36"/>
    </location>
    <ligand>
        <name>[4Fe-4S] cluster</name>
        <dbReference type="ChEBI" id="CHEBI:49883"/>
        <note>ligand shared with heterodimeric partner</note>
    </ligand>
</feature>
<feature type="binding site" evidence="1">
    <location>
        <begin position="414"/>
        <end position="415"/>
    </location>
    <ligand>
        <name>substrate</name>
    </ligand>
</feature>
<organism>
    <name type="scientific">Acidiphilium rubrum</name>
    <dbReference type="NCBI Taxonomy" id="526"/>
    <lineage>
        <taxon>Bacteria</taxon>
        <taxon>Pseudomonadati</taxon>
        <taxon>Pseudomonadota</taxon>
        <taxon>Alphaproteobacteria</taxon>
        <taxon>Acetobacterales</taxon>
        <taxon>Acidocellaceae</taxon>
        <taxon>Acidiphilium</taxon>
    </lineage>
</organism>
<keyword id="KW-0004">4Fe-4S</keyword>
<keyword id="KW-0067">ATP-binding</keyword>
<keyword id="KW-0077">Bacteriochlorophyll biosynthesis</keyword>
<keyword id="KW-0149">Chlorophyll biosynthesis</keyword>
<keyword id="KW-0408">Iron</keyword>
<keyword id="KW-0411">Iron-sulfur</keyword>
<keyword id="KW-0479">Metal-binding</keyword>
<keyword id="KW-0547">Nucleotide-binding</keyword>
<keyword id="KW-0560">Oxidoreductase</keyword>
<keyword id="KW-0602">Photosynthesis</keyword>